<keyword id="KW-0028">Amino-acid biosynthesis</keyword>
<keyword id="KW-0963">Cytoplasm</keyword>
<keyword id="KW-0554">One-carbon metabolism</keyword>
<keyword id="KW-0663">Pyridoxal phosphate</keyword>
<keyword id="KW-1185">Reference proteome</keyword>
<keyword id="KW-0808">Transferase</keyword>
<accession>Q0ABQ9</accession>
<proteinExistence type="inferred from homology"/>
<name>GLYA_ALKEH</name>
<reference key="1">
    <citation type="submission" date="2006-08" db="EMBL/GenBank/DDBJ databases">
        <title>Complete sequence of Alkalilimnicola ehrilichei MLHE-1.</title>
        <authorList>
            <person name="Copeland A."/>
            <person name="Lucas S."/>
            <person name="Lapidus A."/>
            <person name="Barry K."/>
            <person name="Detter J.C."/>
            <person name="Glavina del Rio T."/>
            <person name="Hammon N."/>
            <person name="Israni S."/>
            <person name="Dalin E."/>
            <person name="Tice H."/>
            <person name="Pitluck S."/>
            <person name="Sims D."/>
            <person name="Brettin T."/>
            <person name="Bruce D."/>
            <person name="Han C."/>
            <person name="Tapia R."/>
            <person name="Gilna P."/>
            <person name="Schmutz J."/>
            <person name="Larimer F."/>
            <person name="Land M."/>
            <person name="Hauser L."/>
            <person name="Kyrpides N."/>
            <person name="Mikhailova N."/>
            <person name="Oremland R.S."/>
            <person name="Hoeft S.E."/>
            <person name="Switzer-Blum J."/>
            <person name="Kulp T."/>
            <person name="King G."/>
            <person name="Tabita R."/>
            <person name="Witte B."/>
            <person name="Santini J.M."/>
            <person name="Basu P."/>
            <person name="Hollibaugh J.T."/>
            <person name="Xie G."/>
            <person name="Stolz J.F."/>
            <person name="Richardson P."/>
        </authorList>
    </citation>
    <scope>NUCLEOTIDE SEQUENCE [LARGE SCALE GENOMIC DNA]</scope>
    <source>
        <strain>ATCC BAA-1101 / DSM 17681 / MLHE-1</strain>
    </source>
</reference>
<organism>
    <name type="scientific">Alkalilimnicola ehrlichii (strain ATCC BAA-1101 / DSM 17681 / MLHE-1)</name>
    <dbReference type="NCBI Taxonomy" id="187272"/>
    <lineage>
        <taxon>Bacteria</taxon>
        <taxon>Pseudomonadati</taxon>
        <taxon>Pseudomonadota</taxon>
        <taxon>Gammaproteobacteria</taxon>
        <taxon>Chromatiales</taxon>
        <taxon>Ectothiorhodospiraceae</taxon>
        <taxon>Alkalilimnicola</taxon>
    </lineage>
</organism>
<gene>
    <name evidence="1" type="primary">glyA</name>
    <name type="ordered locus">Mlg_0373</name>
</gene>
<feature type="chain" id="PRO_1000006216" description="Serine hydroxymethyltransferase">
    <location>
        <begin position="1"/>
        <end position="419"/>
    </location>
</feature>
<feature type="binding site" evidence="1">
    <location>
        <position position="121"/>
    </location>
    <ligand>
        <name>(6S)-5,6,7,8-tetrahydrofolate</name>
        <dbReference type="ChEBI" id="CHEBI:57453"/>
    </ligand>
</feature>
<feature type="binding site" evidence="1">
    <location>
        <begin position="125"/>
        <end position="127"/>
    </location>
    <ligand>
        <name>(6S)-5,6,7,8-tetrahydrofolate</name>
        <dbReference type="ChEBI" id="CHEBI:57453"/>
    </ligand>
</feature>
<feature type="binding site" evidence="1">
    <location>
        <begin position="355"/>
        <end position="357"/>
    </location>
    <ligand>
        <name>(6S)-5,6,7,8-tetrahydrofolate</name>
        <dbReference type="ChEBI" id="CHEBI:57453"/>
    </ligand>
</feature>
<feature type="site" description="Plays an important role in substrate specificity" evidence="1">
    <location>
        <position position="229"/>
    </location>
</feature>
<feature type="modified residue" description="N6-(pyridoxal phosphate)lysine" evidence="1">
    <location>
        <position position="230"/>
    </location>
</feature>
<evidence type="ECO:0000255" key="1">
    <source>
        <dbReference type="HAMAP-Rule" id="MF_00051"/>
    </source>
</evidence>
<sequence>MFSRDMTIASFDPELSEAMEAERRRQEDHIELIASENYASPRVLEAQGSVLTNKYAEGYPGKRYYGGCEHVDEAERLAIERAKQLFGADYANVQPHSGSQANAAVYLALLQPGDTILGMSLDHGGHLTHGAKVNFSGRLFNAVQYGVCPDTGELDYAQLERLAKEHQPKMIIGGFSAYSRVVDWQRLRDIADSVGAYLLVDMAHVAGLVAAGVYPSPVQIADVTTTTTHKTLRGPRGGLILARANAEVEKKLNSLVFPGTQGGPLMHAIAGKAVAFKEALEPEFKAYQQQVVANARAMAQGLIERGYKVVSGGTDNHLFLIDLVDKGLTGKAADAALGKAHITVNKNTVPNDPQSPFVTSGLRIGTPAITTRGFKEEECRELAGWMADVLDDIENEDVIARVREQVTQVCRRLPVYQQG</sequence>
<protein>
    <recommendedName>
        <fullName evidence="1">Serine hydroxymethyltransferase</fullName>
        <shortName evidence="1">SHMT</shortName>
        <shortName evidence="1">Serine methylase</shortName>
        <ecNumber evidence="1">2.1.2.1</ecNumber>
    </recommendedName>
</protein>
<comment type="function">
    <text evidence="1">Catalyzes the reversible interconversion of serine and glycine with tetrahydrofolate (THF) serving as the one-carbon carrier. This reaction serves as the major source of one-carbon groups required for the biosynthesis of purines, thymidylate, methionine, and other important biomolecules. Also exhibits THF-independent aldolase activity toward beta-hydroxyamino acids, producing glycine and aldehydes, via a retro-aldol mechanism.</text>
</comment>
<comment type="catalytic activity">
    <reaction evidence="1">
        <text>(6R)-5,10-methylene-5,6,7,8-tetrahydrofolate + glycine + H2O = (6S)-5,6,7,8-tetrahydrofolate + L-serine</text>
        <dbReference type="Rhea" id="RHEA:15481"/>
        <dbReference type="ChEBI" id="CHEBI:15377"/>
        <dbReference type="ChEBI" id="CHEBI:15636"/>
        <dbReference type="ChEBI" id="CHEBI:33384"/>
        <dbReference type="ChEBI" id="CHEBI:57305"/>
        <dbReference type="ChEBI" id="CHEBI:57453"/>
        <dbReference type="EC" id="2.1.2.1"/>
    </reaction>
</comment>
<comment type="cofactor">
    <cofactor evidence="1">
        <name>pyridoxal 5'-phosphate</name>
        <dbReference type="ChEBI" id="CHEBI:597326"/>
    </cofactor>
</comment>
<comment type="pathway">
    <text evidence="1">One-carbon metabolism; tetrahydrofolate interconversion.</text>
</comment>
<comment type="pathway">
    <text evidence="1">Amino-acid biosynthesis; glycine biosynthesis; glycine from L-serine: step 1/1.</text>
</comment>
<comment type="subunit">
    <text evidence="1">Homodimer.</text>
</comment>
<comment type="subcellular location">
    <subcellularLocation>
        <location evidence="1">Cytoplasm</location>
    </subcellularLocation>
</comment>
<comment type="similarity">
    <text evidence="1">Belongs to the SHMT family.</text>
</comment>
<dbReference type="EC" id="2.1.2.1" evidence="1"/>
<dbReference type="EMBL" id="CP000453">
    <property type="protein sequence ID" value="ABI55728.1"/>
    <property type="molecule type" value="Genomic_DNA"/>
</dbReference>
<dbReference type="RefSeq" id="WP_011628124.1">
    <property type="nucleotide sequence ID" value="NC_008340.1"/>
</dbReference>
<dbReference type="SMR" id="Q0ABQ9"/>
<dbReference type="KEGG" id="aeh:Mlg_0373"/>
<dbReference type="eggNOG" id="COG0112">
    <property type="taxonomic scope" value="Bacteria"/>
</dbReference>
<dbReference type="HOGENOM" id="CLU_022477_2_1_6"/>
<dbReference type="OrthoDB" id="9803846at2"/>
<dbReference type="UniPathway" id="UPA00193"/>
<dbReference type="UniPathway" id="UPA00288">
    <property type="reaction ID" value="UER01023"/>
</dbReference>
<dbReference type="Proteomes" id="UP000001962">
    <property type="component" value="Chromosome"/>
</dbReference>
<dbReference type="GO" id="GO:0005829">
    <property type="term" value="C:cytosol"/>
    <property type="evidence" value="ECO:0007669"/>
    <property type="project" value="TreeGrafter"/>
</dbReference>
<dbReference type="GO" id="GO:0004372">
    <property type="term" value="F:glycine hydroxymethyltransferase activity"/>
    <property type="evidence" value="ECO:0007669"/>
    <property type="project" value="UniProtKB-UniRule"/>
</dbReference>
<dbReference type="GO" id="GO:0030170">
    <property type="term" value="F:pyridoxal phosphate binding"/>
    <property type="evidence" value="ECO:0007669"/>
    <property type="project" value="UniProtKB-UniRule"/>
</dbReference>
<dbReference type="GO" id="GO:0019264">
    <property type="term" value="P:glycine biosynthetic process from serine"/>
    <property type="evidence" value="ECO:0007669"/>
    <property type="project" value="UniProtKB-UniRule"/>
</dbReference>
<dbReference type="GO" id="GO:0035999">
    <property type="term" value="P:tetrahydrofolate interconversion"/>
    <property type="evidence" value="ECO:0007669"/>
    <property type="project" value="UniProtKB-UniRule"/>
</dbReference>
<dbReference type="CDD" id="cd00378">
    <property type="entry name" value="SHMT"/>
    <property type="match status" value="1"/>
</dbReference>
<dbReference type="FunFam" id="3.40.640.10:FF:000001">
    <property type="entry name" value="Serine hydroxymethyltransferase"/>
    <property type="match status" value="1"/>
</dbReference>
<dbReference type="FunFam" id="3.90.1150.10:FF:000003">
    <property type="entry name" value="Serine hydroxymethyltransferase"/>
    <property type="match status" value="1"/>
</dbReference>
<dbReference type="Gene3D" id="3.90.1150.10">
    <property type="entry name" value="Aspartate Aminotransferase, domain 1"/>
    <property type="match status" value="1"/>
</dbReference>
<dbReference type="Gene3D" id="3.40.640.10">
    <property type="entry name" value="Type I PLP-dependent aspartate aminotransferase-like (Major domain)"/>
    <property type="match status" value="1"/>
</dbReference>
<dbReference type="HAMAP" id="MF_00051">
    <property type="entry name" value="SHMT"/>
    <property type="match status" value="1"/>
</dbReference>
<dbReference type="InterPro" id="IPR015424">
    <property type="entry name" value="PyrdxlP-dep_Trfase"/>
</dbReference>
<dbReference type="InterPro" id="IPR015421">
    <property type="entry name" value="PyrdxlP-dep_Trfase_major"/>
</dbReference>
<dbReference type="InterPro" id="IPR015422">
    <property type="entry name" value="PyrdxlP-dep_Trfase_small"/>
</dbReference>
<dbReference type="InterPro" id="IPR001085">
    <property type="entry name" value="Ser_HO-MeTrfase"/>
</dbReference>
<dbReference type="InterPro" id="IPR049943">
    <property type="entry name" value="Ser_HO-MeTrfase-like"/>
</dbReference>
<dbReference type="InterPro" id="IPR019798">
    <property type="entry name" value="Ser_HO-MeTrfase_PLP_BS"/>
</dbReference>
<dbReference type="InterPro" id="IPR039429">
    <property type="entry name" value="SHMT-like_dom"/>
</dbReference>
<dbReference type="NCBIfam" id="NF000586">
    <property type="entry name" value="PRK00011.1"/>
    <property type="match status" value="1"/>
</dbReference>
<dbReference type="PANTHER" id="PTHR11680">
    <property type="entry name" value="SERINE HYDROXYMETHYLTRANSFERASE"/>
    <property type="match status" value="1"/>
</dbReference>
<dbReference type="PANTHER" id="PTHR11680:SF50">
    <property type="entry name" value="SERINE HYDROXYMETHYLTRANSFERASE"/>
    <property type="match status" value="1"/>
</dbReference>
<dbReference type="Pfam" id="PF00464">
    <property type="entry name" value="SHMT"/>
    <property type="match status" value="1"/>
</dbReference>
<dbReference type="PIRSF" id="PIRSF000412">
    <property type="entry name" value="SHMT"/>
    <property type="match status" value="1"/>
</dbReference>
<dbReference type="SUPFAM" id="SSF53383">
    <property type="entry name" value="PLP-dependent transferases"/>
    <property type="match status" value="1"/>
</dbReference>
<dbReference type="PROSITE" id="PS00096">
    <property type="entry name" value="SHMT"/>
    <property type="match status" value="1"/>
</dbReference>